<feature type="chain" id="PRO_1000081123" description="UPF0173 metal-dependent hydrolase Cmaq_1073">
    <location>
        <begin position="1"/>
        <end position="227"/>
    </location>
</feature>
<organism>
    <name type="scientific">Caldivirga maquilingensis (strain ATCC 700844 / DSM 13496 / JCM 10307 / IC-167)</name>
    <dbReference type="NCBI Taxonomy" id="397948"/>
    <lineage>
        <taxon>Archaea</taxon>
        <taxon>Thermoproteota</taxon>
        <taxon>Thermoprotei</taxon>
        <taxon>Thermoproteales</taxon>
        <taxon>Thermoproteaceae</taxon>
        <taxon>Caldivirga</taxon>
    </lineage>
</organism>
<proteinExistence type="inferred from homology"/>
<sequence>MGYLKWLGHAAFEVELMGKRILIDPWISNPNSPVTLGELSKVDFILVTHDHSDHLGEAVQIANKTNATVVSIFELAVYLAEKEGVKNTIGMNIGGPVKLTNEIEVYMTPALHSSTHGSPVGFVIKSPEAVIYHAGDTGLFSDMELIGRLYKPDVALLPIGGYFTMSPREAAYAVSLINPRAVVPMHYNTFPQIRQDPEEFRNLTESLAPHVRVYVMKPGDVLNLPIK</sequence>
<keyword id="KW-0378">Hydrolase</keyword>
<keyword id="KW-1185">Reference proteome</keyword>
<accession>A8MDP6</accession>
<name>Y1073_CALMQ</name>
<comment type="similarity">
    <text evidence="1">Belongs to the UPF0173 family.</text>
</comment>
<protein>
    <recommendedName>
        <fullName evidence="1">UPF0173 metal-dependent hydrolase Cmaq_1073</fullName>
    </recommendedName>
</protein>
<gene>
    <name type="ordered locus">Cmaq_1073</name>
</gene>
<evidence type="ECO:0000255" key="1">
    <source>
        <dbReference type="HAMAP-Rule" id="MF_00457"/>
    </source>
</evidence>
<dbReference type="EMBL" id="CP000852">
    <property type="protein sequence ID" value="ABW01902.1"/>
    <property type="molecule type" value="Genomic_DNA"/>
</dbReference>
<dbReference type="RefSeq" id="WP_012186121.1">
    <property type="nucleotide sequence ID" value="NC_009954.1"/>
</dbReference>
<dbReference type="SMR" id="A8MDP6"/>
<dbReference type="STRING" id="397948.Cmaq_1073"/>
<dbReference type="GeneID" id="5710372"/>
<dbReference type="KEGG" id="cma:Cmaq_1073"/>
<dbReference type="eggNOG" id="arCOG00497">
    <property type="taxonomic scope" value="Archaea"/>
</dbReference>
<dbReference type="HOGENOM" id="CLU_070010_4_0_2"/>
<dbReference type="OrthoDB" id="28313at2157"/>
<dbReference type="Proteomes" id="UP000001137">
    <property type="component" value="Chromosome"/>
</dbReference>
<dbReference type="GO" id="GO:0016787">
    <property type="term" value="F:hydrolase activity"/>
    <property type="evidence" value="ECO:0007669"/>
    <property type="project" value="UniProtKB-UniRule"/>
</dbReference>
<dbReference type="Gene3D" id="3.60.15.10">
    <property type="entry name" value="Ribonuclease Z/Hydroxyacylglutathione hydrolase-like"/>
    <property type="match status" value="1"/>
</dbReference>
<dbReference type="HAMAP" id="MF_00457">
    <property type="entry name" value="UPF0173"/>
    <property type="match status" value="1"/>
</dbReference>
<dbReference type="InterPro" id="IPR001279">
    <property type="entry name" value="Metallo-B-lactamas"/>
</dbReference>
<dbReference type="InterPro" id="IPR036866">
    <property type="entry name" value="RibonucZ/Hydroxyglut_hydro"/>
</dbReference>
<dbReference type="InterPro" id="IPR022877">
    <property type="entry name" value="UPF0173"/>
</dbReference>
<dbReference type="InterPro" id="IPR050114">
    <property type="entry name" value="UPF0173_UPF0282_UlaG_hydrolase"/>
</dbReference>
<dbReference type="NCBIfam" id="NF001911">
    <property type="entry name" value="PRK00685.1"/>
    <property type="match status" value="1"/>
</dbReference>
<dbReference type="PANTHER" id="PTHR43546:SF3">
    <property type="entry name" value="UPF0173 METAL-DEPENDENT HYDROLASE MJ1163"/>
    <property type="match status" value="1"/>
</dbReference>
<dbReference type="PANTHER" id="PTHR43546">
    <property type="entry name" value="UPF0173 METAL-DEPENDENT HYDROLASE MJ1163-RELATED"/>
    <property type="match status" value="1"/>
</dbReference>
<dbReference type="Pfam" id="PF12706">
    <property type="entry name" value="Lactamase_B_2"/>
    <property type="match status" value="1"/>
</dbReference>
<dbReference type="SMART" id="SM00849">
    <property type="entry name" value="Lactamase_B"/>
    <property type="match status" value="1"/>
</dbReference>
<dbReference type="SUPFAM" id="SSF56281">
    <property type="entry name" value="Metallo-hydrolase/oxidoreductase"/>
    <property type="match status" value="1"/>
</dbReference>
<reference key="1">
    <citation type="submission" date="2007-10" db="EMBL/GenBank/DDBJ databases">
        <title>Complete sequence of Caldivirga maquilingensis IC-167.</title>
        <authorList>
            <consortium name="US DOE Joint Genome Institute"/>
            <person name="Copeland A."/>
            <person name="Lucas S."/>
            <person name="Lapidus A."/>
            <person name="Barry K."/>
            <person name="Glavina del Rio T."/>
            <person name="Dalin E."/>
            <person name="Tice H."/>
            <person name="Pitluck S."/>
            <person name="Saunders E."/>
            <person name="Brettin T."/>
            <person name="Bruce D."/>
            <person name="Detter J.C."/>
            <person name="Han C."/>
            <person name="Schmutz J."/>
            <person name="Larimer F."/>
            <person name="Land M."/>
            <person name="Hauser L."/>
            <person name="Kyrpides N."/>
            <person name="Ivanova N."/>
            <person name="Biddle J.F."/>
            <person name="Zhang Z."/>
            <person name="Fitz-Gibbon S.T."/>
            <person name="Lowe T.M."/>
            <person name="Saltikov C."/>
            <person name="House C.H."/>
            <person name="Richardson P."/>
        </authorList>
    </citation>
    <scope>NUCLEOTIDE SEQUENCE [LARGE SCALE GENOMIC DNA]</scope>
    <source>
        <strain>ATCC 700844 / DSM 13496 / JCM 10307 / IC-167</strain>
    </source>
</reference>